<feature type="chain" id="PRO_0000219314" description="Cyclic nucleotide-gated channel alpha-2">
    <location>
        <begin position="1"/>
        <end position="664"/>
    </location>
</feature>
<feature type="topological domain" description="Cytoplasmic" evidence="8">
    <location>
        <begin position="1"/>
        <end position="144"/>
    </location>
</feature>
<feature type="transmembrane region" description="Helical; Name=S1" evidence="2">
    <location>
        <begin position="145"/>
        <end position="166"/>
    </location>
</feature>
<feature type="topological domain" description="Extracellular" evidence="8">
    <location>
        <begin position="167"/>
        <end position="176"/>
    </location>
</feature>
<feature type="transmembrane region" description="Helical; Name=S2" evidence="2">
    <location>
        <begin position="177"/>
        <end position="197"/>
    </location>
</feature>
<feature type="topological domain" description="Cytoplasmic" evidence="8">
    <location>
        <begin position="198"/>
        <end position="222"/>
    </location>
</feature>
<feature type="transmembrane region" description="Helical; Name=S3" evidence="2">
    <location>
        <begin position="223"/>
        <end position="241"/>
    </location>
</feature>
<feature type="topological domain" description="Extracellular" evidence="8">
    <location>
        <begin position="242"/>
        <end position="246"/>
    </location>
</feature>
<feature type="transmembrane region" description="Helical; Name=S4" evidence="2">
    <location>
        <begin position="247"/>
        <end position="265"/>
    </location>
</feature>
<feature type="topological domain" description="Cytoplasmic" evidence="8">
    <location>
        <begin position="266"/>
        <end position="272"/>
    </location>
</feature>
<feature type="transmembrane region" description="Helical; Name=S5" evidence="2">
    <location>
        <begin position="273"/>
        <end position="296"/>
    </location>
</feature>
<feature type="topological domain" description="Extracellular" evidence="8">
    <location>
        <begin position="297"/>
        <end position="319"/>
    </location>
</feature>
<feature type="transmembrane region" description="Helical; Name=P-helix" evidence="2">
    <location>
        <begin position="320"/>
        <end position="354"/>
    </location>
</feature>
<feature type="transmembrane region" description="Helical; Name=S6" evidence="2">
    <location>
        <begin position="355"/>
        <end position="379"/>
    </location>
</feature>
<feature type="topological domain" description="Cytoplasmic" evidence="8">
    <location>
        <begin position="380"/>
        <end position="664"/>
    </location>
</feature>
<feature type="region of interest" description="Disordered" evidence="6">
    <location>
        <begin position="1"/>
        <end position="49"/>
    </location>
</feature>
<feature type="region of interest" description="Ion conduction pathway" evidence="2">
    <location>
        <begin position="270"/>
        <end position="378"/>
    </location>
</feature>
<feature type="region of interest" description="Selectivity filter" evidence="2">
    <location>
        <begin position="337"/>
        <end position="340"/>
    </location>
</feature>
<feature type="region of interest" description="C-linker" evidence="2">
    <location>
        <begin position="380"/>
        <end position="456"/>
    </location>
</feature>
<feature type="region of interest" description="Cyclic nucleotide-binding domain" evidence="2">
    <location>
        <begin position="460"/>
        <end position="580"/>
    </location>
</feature>
<feature type="region of interest" description="Disordered" evidence="6">
    <location>
        <begin position="644"/>
        <end position="664"/>
    </location>
</feature>
<feature type="coiled-coil region" evidence="2">
    <location>
        <begin position="597"/>
        <end position="651"/>
    </location>
</feature>
<feature type="compositionally biased region" description="Polar residues" evidence="6">
    <location>
        <begin position="1"/>
        <end position="20"/>
    </location>
</feature>
<feature type="binding site" evidence="2">
    <location>
        <position position="520"/>
    </location>
    <ligand>
        <name>3',5'-cyclic GMP</name>
        <dbReference type="ChEBI" id="CHEBI:57746"/>
    </ligand>
</feature>
<feature type="binding site" evidence="2">
    <location>
        <position position="523"/>
    </location>
    <ligand>
        <name>3',5'-cyclic GMP</name>
        <dbReference type="ChEBI" id="CHEBI:57746"/>
    </ligand>
</feature>
<feature type="binding site" evidence="2">
    <location>
        <position position="536"/>
    </location>
    <ligand>
        <name>3',5'-cyclic AMP</name>
        <dbReference type="ChEBI" id="CHEBI:58165"/>
    </ligand>
</feature>
<feature type="binding site" evidence="2">
    <location>
        <position position="536"/>
    </location>
    <ligand>
        <name>3',5'-cyclic GMP</name>
        <dbReference type="ChEBI" id="CHEBI:57746"/>
    </ligand>
</feature>
<feature type="binding site" evidence="2">
    <location>
        <position position="537"/>
    </location>
    <ligand>
        <name>3',5'-cyclic AMP</name>
        <dbReference type="ChEBI" id="CHEBI:58165"/>
    </ligand>
</feature>
<feature type="binding site" evidence="2">
    <location>
        <position position="537"/>
    </location>
    <ligand>
        <name>3',5'-cyclic GMP</name>
        <dbReference type="ChEBI" id="CHEBI:57746"/>
    </ligand>
</feature>
<feature type="site" description="Central gate" evidence="2">
    <location>
        <position position="364"/>
    </location>
</feature>
<feature type="site" description="Central gate" evidence="2">
    <location>
        <position position="368"/>
    </location>
</feature>
<keyword id="KW-0106">Calcium</keyword>
<keyword id="KW-0107">Calcium channel</keyword>
<keyword id="KW-0109">Calcium transport</keyword>
<keyword id="KW-0112">Calmodulin-binding</keyword>
<keyword id="KW-0114">cAMP</keyword>
<keyword id="KW-0116">cAMP-binding</keyword>
<keyword id="KW-1003">Cell membrane</keyword>
<keyword id="KW-0966">Cell projection</keyword>
<keyword id="KW-0140">cGMP</keyword>
<keyword id="KW-0142">cGMP-binding</keyword>
<keyword id="KW-0175">Coiled coil</keyword>
<keyword id="KW-0407">Ion channel</keyword>
<keyword id="KW-0406">Ion transport</keyword>
<keyword id="KW-1071">Ligand-gated ion channel</keyword>
<keyword id="KW-0472">Membrane</keyword>
<keyword id="KW-0547">Nucleotide-binding</keyword>
<keyword id="KW-0552">Olfaction</keyword>
<keyword id="KW-1185">Reference proteome</keyword>
<keyword id="KW-0716">Sensory transduction</keyword>
<keyword id="KW-0812">Transmembrane</keyword>
<keyword id="KW-1133">Transmembrane helix</keyword>
<keyword id="KW-0813">Transport</keyword>
<accession>Q28718</accession>
<evidence type="ECO:0000250" key="1"/>
<evidence type="ECO:0000250" key="2">
    <source>
        <dbReference type="UniProtKB" id="P29973"/>
    </source>
</evidence>
<evidence type="ECO:0000250" key="3">
    <source>
        <dbReference type="UniProtKB" id="Q00194"/>
    </source>
</evidence>
<evidence type="ECO:0000250" key="4">
    <source>
        <dbReference type="UniProtKB" id="Q00195"/>
    </source>
</evidence>
<evidence type="ECO:0000255" key="5"/>
<evidence type="ECO:0000256" key="6">
    <source>
        <dbReference type="SAM" id="MobiDB-lite"/>
    </source>
</evidence>
<evidence type="ECO:0000303" key="7">
    <source>
    </source>
</evidence>
<evidence type="ECO:0000305" key="8"/>
<name>CNGA2_RABIT</name>
<reference key="1">
    <citation type="journal article" date="1993" name="FEBS Lett.">
        <title>Primary structure and functional expression of a cyclic nucleotide-gated channel from rabbit aorta.</title>
        <authorList>
            <person name="Biel M."/>
            <person name="Altenhofen W."/>
            <person name="Hullin R."/>
            <person name="Ludwig J."/>
            <person name="Freichel M."/>
            <person name="Flockerzi V."/>
            <person name="Dascal N."/>
            <person name="Kaupp U.B."/>
            <person name="Hofmann F."/>
        </authorList>
    </citation>
    <scope>NUCLEOTIDE SEQUENCE [MRNA]</scope>
    <source>
        <tissue>Aorta</tissue>
    </source>
</reference>
<reference key="2">
    <citation type="journal article" date="2001" name="Science">
        <title>Nomenclature for ion channel subunits.</title>
        <authorList>
            <person name="Bradley J."/>
            <person name="Frings S."/>
            <person name="Yau K.W."/>
            <person name="Reed R."/>
        </authorList>
    </citation>
    <scope>NOMENCLATURE</scope>
</reference>
<sequence length="664" mass="76206">MTEKSNGVKSSPANNHNNHVPATIKANGKDESRTRSRPQSAADDDTSSELQRLAEMDAPQQRRGGFRRIVRLVGVIRQWANRNFREEEARPDSFLERFRGPELQTVTTQQGDGKGDKDGDGKGTKKKFELFVLDPAGDWYYRWLFVIAMPVLYNWCLLVARACFSDLQRGYFLVWLVLDYFSDVVYIADLFIRLRTGFLEQGLLVKDPKKLRDNYIHTLQFKLDVASIIPTDLIYFAVGIHNPELRFNRLLHFARMFEFFDRTETRTSYPNIFRISNLVLYILVIIHWNACIYYAISKSIGFGVDTWVYPNITDPEYGYLAREYIYCLYWSTLTLTTIGETPPPVKDEEYLFVIFDFLIGVLIFATIVGNVGSMISNMNATRAEFQAKIDAVKHYMQFRKVSKEMEAKVIKWFDYLWTNKKTVDEREVLKNLPAKLRAEIAINVHLSTLKKVRIFQDCEAGLLVELVLKLRPQVFSPGDYICRKGDIGKEMYIIKEGKLAVVADDGVTQYALLSAGSCFGEISILNIKGSKMGNRRTANIRSLGYSDLFCLSKDDLMEAVTEYPDAKKVLEERGREILMKEGLLDENEVAASMEVDVQEKLKQLETNMETLYTRFGRLLAEYTGAQQKLKQRITVLEVKMKQNTEDDYLSDGMNSPEPAAAEQP</sequence>
<dbReference type="EMBL" id="X59668">
    <property type="protein sequence ID" value="CAA42201.1"/>
    <property type="status" value="ALT_INIT"/>
    <property type="molecule type" value="mRNA"/>
</dbReference>
<dbReference type="PIR" id="S35691">
    <property type="entry name" value="S35691"/>
</dbReference>
<dbReference type="RefSeq" id="NP_001075863.1">
    <property type="nucleotide sequence ID" value="NM_001082394.1"/>
</dbReference>
<dbReference type="SMR" id="Q28718"/>
<dbReference type="FunCoup" id="Q28718">
    <property type="interactions" value="2"/>
</dbReference>
<dbReference type="STRING" id="9986.ENSOCUP00000008136"/>
<dbReference type="GlyCosmos" id="Q28718">
    <property type="glycosylation" value="1 site, No reported glycans"/>
</dbReference>
<dbReference type="PaxDb" id="9986-ENSOCUP00000008136"/>
<dbReference type="GeneID" id="100009269"/>
<dbReference type="KEGG" id="ocu:100009269"/>
<dbReference type="CTD" id="1260"/>
<dbReference type="eggNOG" id="KOG0500">
    <property type="taxonomic scope" value="Eukaryota"/>
</dbReference>
<dbReference type="InParanoid" id="Q28718"/>
<dbReference type="OrthoDB" id="421226at2759"/>
<dbReference type="Proteomes" id="UP000001811">
    <property type="component" value="Unplaced"/>
</dbReference>
<dbReference type="GO" id="GO:0017071">
    <property type="term" value="C:intracellular cyclic nucleotide activated cation channel complex"/>
    <property type="evidence" value="ECO:0007669"/>
    <property type="project" value="TreeGrafter"/>
</dbReference>
<dbReference type="GO" id="GO:0098804">
    <property type="term" value="C:non-motile cilium membrane"/>
    <property type="evidence" value="ECO:0000250"/>
    <property type="project" value="UniProtKB"/>
</dbReference>
<dbReference type="GO" id="GO:0005262">
    <property type="term" value="F:calcium channel activity"/>
    <property type="evidence" value="ECO:0007669"/>
    <property type="project" value="UniProtKB-KW"/>
</dbReference>
<dbReference type="GO" id="GO:0005516">
    <property type="term" value="F:calmodulin binding"/>
    <property type="evidence" value="ECO:0007669"/>
    <property type="project" value="UniProtKB-KW"/>
</dbReference>
<dbReference type="GO" id="GO:0030552">
    <property type="term" value="F:cAMP binding"/>
    <property type="evidence" value="ECO:0007669"/>
    <property type="project" value="UniProtKB-KW"/>
</dbReference>
<dbReference type="GO" id="GO:0030553">
    <property type="term" value="F:cGMP binding"/>
    <property type="evidence" value="ECO:0007669"/>
    <property type="project" value="UniProtKB-KW"/>
</dbReference>
<dbReference type="GO" id="GO:0005222">
    <property type="term" value="F:intracellularly cAMP-activated cation channel activity"/>
    <property type="evidence" value="ECO:0007669"/>
    <property type="project" value="TreeGrafter"/>
</dbReference>
<dbReference type="GO" id="GO:0005223">
    <property type="term" value="F:intracellularly cGMP-activated cation channel activity"/>
    <property type="evidence" value="ECO:0007669"/>
    <property type="project" value="TreeGrafter"/>
</dbReference>
<dbReference type="GO" id="GO:0044877">
    <property type="term" value="F:protein-containing complex binding"/>
    <property type="evidence" value="ECO:0007669"/>
    <property type="project" value="TreeGrafter"/>
</dbReference>
<dbReference type="GO" id="GO:0006816">
    <property type="term" value="P:calcium ion transport"/>
    <property type="evidence" value="ECO:0000250"/>
    <property type="project" value="UniProtKB"/>
</dbReference>
<dbReference type="GO" id="GO:0006813">
    <property type="term" value="P:potassium ion transport"/>
    <property type="evidence" value="ECO:0000250"/>
    <property type="project" value="UniProtKB"/>
</dbReference>
<dbReference type="GO" id="GO:0007608">
    <property type="term" value="P:sensory perception of smell"/>
    <property type="evidence" value="ECO:0007669"/>
    <property type="project" value="UniProtKB-KW"/>
</dbReference>
<dbReference type="GO" id="GO:0006814">
    <property type="term" value="P:sodium ion transport"/>
    <property type="evidence" value="ECO:0000250"/>
    <property type="project" value="UniProtKB"/>
</dbReference>
<dbReference type="CDD" id="cd00038">
    <property type="entry name" value="CAP_ED"/>
    <property type="match status" value="1"/>
</dbReference>
<dbReference type="FunFam" id="2.60.120.10:FF:000002">
    <property type="entry name" value="Cyclic nucleotide gated channel alpha 1a"/>
    <property type="match status" value="1"/>
</dbReference>
<dbReference type="FunFam" id="1.10.287.630:FF:000001">
    <property type="entry name" value="Cyclic nucleotide-gated channel alpha 3"/>
    <property type="match status" value="1"/>
</dbReference>
<dbReference type="FunFam" id="1.10.287.70:FF:000030">
    <property type="entry name" value="Cyclic nucleotide-gated channel alpha 3"/>
    <property type="match status" value="1"/>
</dbReference>
<dbReference type="FunFam" id="1.20.5.300:FF:000002">
    <property type="entry name" value="Cyclic nucleotide-gated channel alpha 3"/>
    <property type="match status" value="1"/>
</dbReference>
<dbReference type="Gene3D" id="1.10.287.70">
    <property type="match status" value="1"/>
</dbReference>
<dbReference type="Gene3D" id="1.20.5.300">
    <property type="match status" value="1"/>
</dbReference>
<dbReference type="Gene3D" id="1.10.287.630">
    <property type="entry name" value="Helix hairpin bin"/>
    <property type="match status" value="1"/>
</dbReference>
<dbReference type="Gene3D" id="2.60.120.10">
    <property type="entry name" value="Jelly Rolls"/>
    <property type="match status" value="1"/>
</dbReference>
<dbReference type="InterPro" id="IPR032406">
    <property type="entry name" value="CLZ_dom"/>
</dbReference>
<dbReference type="InterPro" id="IPR050866">
    <property type="entry name" value="CNG_cation_channel"/>
</dbReference>
<dbReference type="InterPro" id="IPR018488">
    <property type="entry name" value="cNMP-bd_CS"/>
</dbReference>
<dbReference type="InterPro" id="IPR000595">
    <property type="entry name" value="cNMP-bd_dom"/>
</dbReference>
<dbReference type="InterPro" id="IPR018490">
    <property type="entry name" value="cNMP-bd_dom_sf"/>
</dbReference>
<dbReference type="InterPro" id="IPR005821">
    <property type="entry name" value="Ion_trans_dom"/>
</dbReference>
<dbReference type="InterPro" id="IPR014710">
    <property type="entry name" value="RmlC-like_jellyroll"/>
</dbReference>
<dbReference type="PANTHER" id="PTHR45638">
    <property type="entry name" value="CYCLIC NUCLEOTIDE-GATED CATION CHANNEL SUBUNIT A"/>
    <property type="match status" value="1"/>
</dbReference>
<dbReference type="PANTHER" id="PTHR45638:SF3">
    <property type="entry name" value="CYCLIC NUCLEOTIDE-GATED OLFACTORY CHANNEL"/>
    <property type="match status" value="1"/>
</dbReference>
<dbReference type="Pfam" id="PF16526">
    <property type="entry name" value="CLZ"/>
    <property type="match status" value="1"/>
</dbReference>
<dbReference type="Pfam" id="PF00027">
    <property type="entry name" value="cNMP_binding"/>
    <property type="match status" value="1"/>
</dbReference>
<dbReference type="Pfam" id="PF00520">
    <property type="entry name" value="Ion_trans"/>
    <property type="match status" value="1"/>
</dbReference>
<dbReference type="SMART" id="SM00100">
    <property type="entry name" value="cNMP"/>
    <property type="match status" value="1"/>
</dbReference>
<dbReference type="SUPFAM" id="SSF51206">
    <property type="entry name" value="cAMP-binding domain-like"/>
    <property type="match status" value="1"/>
</dbReference>
<dbReference type="SUPFAM" id="SSF81324">
    <property type="entry name" value="Voltage-gated potassium channels"/>
    <property type="match status" value="1"/>
</dbReference>
<dbReference type="PROSITE" id="PS00888">
    <property type="entry name" value="CNMP_BINDING_1"/>
    <property type="match status" value="1"/>
</dbReference>
<dbReference type="PROSITE" id="PS00889">
    <property type="entry name" value="CNMP_BINDING_2"/>
    <property type="match status" value="1"/>
</dbReference>
<dbReference type="PROSITE" id="PS50042">
    <property type="entry name" value="CNMP_BINDING_3"/>
    <property type="match status" value="1"/>
</dbReference>
<organism>
    <name type="scientific">Oryctolagus cuniculus</name>
    <name type="common">Rabbit</name>
    <dbReference type="NCBI Taxonomy" id="9986"/>
    <lineage>
        <taxon>Eukaryota</taxon>
        <taxon>Metazoa</taxon>
        <taxon>Chordata</taxon>
        <taxon>Craniata</taxon>
        <taxon>Vertebrata</taxon>
        <taxon>Euteleostomi</taxon>
        <taxon>Mammalia</taxon>
        <taxon>Eutheria</taxon>
        <taxon>Euarchontoglires</taxon>
        <taxon>Glires</taxon>
        <taxon>Lagomorpha</taxon>
        <taxon>Leporidae</taxon>
        <taxon>Oryctolagus</taxon>
    </lineage>
</organism>
<gene>
    <name evidence="7" type="primary">CNGA2</name>
    <name type="synonym">CNCG2</name>
</gene>
<proteinExistence type="evidence at transcript level"/>
<comment type="function">
    <text evidence="4">Pore-forming subunit of the olfactory cyclic nucleotide-gated channel. Operates in the cilia of olfactory sensory neurons where chemical stimulation of the odorant is converted to an electrical signal. Mediates odorant-induced cAMP-dependent Ca(2+) influx triggering neuron depolarization. The rise of intracellular Ca(2+) levels potentiates the olfactory response by activating Ca(2+)-dependent Cl(-) channels, but it also serves as a negative feedback signal to desensitize the channel for rapid adaptation to odorants. Conducts cAMP- and cGMP-gated ion currents, with permeability for monovalent and divalent cations.</text>
</comment>
<comment type="catalytic activity">
    <reaction evidence="4">
        <text>Ca(2+)(in) = Ca(2+)(out)</text>
        <dbReference type="Rhea" id="RHEA:29671"/>
        <dbReference type="ChEBI" id="CHEBI:29108"/>
    </reaction>
</comment>
<comment type="catalytic activity">
    <reaction evidence="4">
        <text>Na(+)(in) = Na(+)(out)</text>
        <dbReference type="Rhea" id="RHEA:34963"/>
        <dbReference type="ChEBI" id="CHEBI:29101"/>
    </reaction>
</comment>
<comment type="catalytic activity">
    <reaction evidence="4">
        <text>K(+)(in) = K(+)(out)</text>
        <dbReference type="Rhea" id="RHEA:29463"/>
        <dbReference type="ChEBI" id="CHEBI:29103"/>
    </reaction>
</comment>
<comment type="catalytic activity">
    <reaction evidence="3">
        <text>NH4(+)(in) = NH4(+)(out)</text>
        <dbReference type="Rhea" id="RHEA:28747"/>
        <dbReference type="ChEBI" id="CHEBI:28938"/>
    </reaction>
</comment>
<comment type="catalytic activity">
    <reaction evidence="3">
        <text>Rb(+)(in) = Rb(+)(out)</text>
        <dbReference type="Rhea" id="RHEA:78547"/>
        <dbReference type="ChEBI" id="CHEBI:49847"/>
    </reaction>
</comment>
<comment type="catalytic activity">
    <reaction evidence="3">
        <text>Li(+)(in) = Li(+)(out)</text>
        <dbReference type="Rhea" id="RHEA:78551"/>
        <dbReference type="ChEBI" id="CHEBI:49713"/>
    </reaction>
</comment>
<comment type="catalytic activity">
    <reaction evidence="3">
        <text>Cs(+)(in) = Cs(+)(out)</text>
        <dbReference type="Rhea" id="RHEA:78555"/>
        <dbReference type="ChEBI" id="CHEBI:49547"/>
    </reaction>
</comment>
<comment type="subunit">
    <text evidence="4">The olfactory cyclic nucleotide-gated channel is an heterotetramer composed of CNGA2, CNGA4 and CNGB1b subunits with 2:1:1 stoichiometry.</text>
</comment>
<comment type="subcellular location">
    <subcellularLocation>
        <location evidence="4">Cell projection</location>
        <location evidence="4">Cilium membrane</location>
        <topology evidence="5">Multi-pass membrane protein</topology>
    </subcellularLocation>
</comment>
<comment type="domain">
    <text evidence="1">The C-terminal coiled-coil domain mediates trimerization of CNGA subunits.</text>
</comment>
<comment type="similarity">
    <text evidence="8">Belongs to the cyclic nucleotide-gated cation channel (TC 1.A.1.5) family. CNGA2 subfamily.</text>
</comment>
<comment type="sequence caution" evidence="8">
    <conflict type="erroneous initiation">
        <sequence resource="EMBL-CDS" id="CAA42201"/>
    </conflict>
</comment>
<protein>
    <recommendedName>
        <fullName>Cyclic nucleotide-gated channel alpha-2</fullName>
        <shortName>CNG channel alpha-2</shortName>
        <shortName>CNG-2</shortName>
        <shortName evidence="7">CNG2</shortName>
    </recommendedName>
    <alternativeName>
        <fullName>Aorta CNG channel</fullName>
        <shortName>RACNG</shortName>
    </alternativeName>
    <alternativeName>
        <fullName>Olfactory cyclic nucleotide-gated channel subunit 1</fullName>
        <shortName evidence="7">OCNC1</shortName>
    </alternativeName>
</protein>